<sequence>MPRSQKNDNFIDKTFTVLADIVLKILPTSKEEKEAFSYYRDGMSAQSEGEYAEALENYYEALKLEEDPYDRSYILYNIGLIYASNGEYVKALEYYHQGLELNFKLPQALNNIAVIYHYQGVQAIEDKDTELSKLMFDKAAQYWQQAIKLAPDNYIEAQNWLKTTGRMRNIQGY</sequence>
<evidence type="ECO:0000255" key="1">
    <source>
        <dbReference type="HAMAP-Rule" id="MF_00439"/>
    </source>
</evidence>
<feature type="chain" id="PRO_0000275644" description="Photosystem I assembly protein Ycf3">
    <location>
        <begin position="1"/>
        <end position="173"/>
    </location>
</feature>
<feature type="repeat" description="TPR 1">
    <location>
        <begin position="35"/>
        <end position="68"/>
    </location>
</feature>
<feature type="repeat" description="TPR 2">
    <location>
        <begin position="72"/>
        <end position="105"/>
    </location>
</feature>
<feature type="repeat" description="TPR 3">
    <location>
        <begin position="120"/>
        <end position="153"/>
    </location>
</feature>
<gene>
    <name evidence="1" type="primary">ycf3</name>
</gene>
<dbReference type="EMBL" id="AP006715">
    <property type="protein sequence ID" value="BAE92382.1"/>
    <property type="molecule type" value="Genomic_DNA"/>
</dbReference>
<dbReference type="RefSeq" id="YP_536939.1">
    <property type="nucleotide sequence ID" value="NC_007932.1"/>
</dbReference>
<dbReference type="SMR" id="Q1XDM9"/>
<dbReference type="GeneID" id="3978970"/>
<dbReference type="GO" id="GO:0009535">
    <property type="term" value="C:chloroplast thylakoid membrane"/>
    <property type="evidence" value="ECO:0007669"/>
    <property type="project" value="UniProtKB-SubCell"/>
</dbReference>
<dbReference type="GO" id="GO:0015979">
    <property type="term" value="P:photosynthesis"/>
    <property type="evidence" value="ECO:0007669"/>
    <property type="project" value="UniProtKB-UniRule"/>
</dbReference>
<dbReference type="Gene3D" id="1.25.40.10">
    <property type="entry name" value="Tetratricopeptide repeat domain"/>
    <property type="match status" value="1"/>
</dbReference>
<dbReference type="HAMAP" id="MF_00439">
    <property type="entry name" value="Ycf3"/>
    <property type="match status" value="1"/>
</dbReference>
<dbReference type="InterPro" id="IPR022818">
    <property type="entry name" value="PSI_Ycf3_assembly"/>
</dbReference>
<dbReference type="InterPro" id="IPR011990">
    <property type="entry name" value="TPR-like_helical_dom_sf"/>
</dbReference>
<dbReference type="InterPro" id="IPR019734">
    <property type="entry name" value="TPR_rpt"/>
</dbReference>
<dbReference type="InterPro" id="IPR051685">
    <property type="entry name" value="Ycf3/AcsC/BcsC/TPR_MFPF"/>
</dbReference>
<dbReference type="NCBIfam" id="NF002725">
    <property type="entry name" value="PRK02603.1"/>
    <property type="match status" value="1"/>
</dbReference>
<dbReference type="PANTHER" id="PTHR44943">
    <property type="entry name" value="CELLULOSE SYNTHASE OPERON PROTEIN C"/>
    <property type="match status" value="1"/>
</dbReference>
<dbReference type="PANTHER" id="PTHR44943:SF9">
    <property type="entry name" value="TPR-REPEAT-CONTAINING PROTEIN"/>
    <property type="match status" value="1"/>
</dbReference>
<dbReference type="Pfam" id="PF00515">
    <property type="entry name" value="TPR_1"/>
    <property type="match status" value="1"/>
</dbReference>
<dbReference type="Pfam" id="PF13181">
    <property type="entry name" value="TPR_8"/>
    <property type="match status" value="1"/>
</dbReference>
<dbReference type="SMART" id="SM00028">
    <property type="entry name" value="TPR"/>
    <property type="match status" value="3"/>
</dbReference>
<dbReference type="SUPFAM" id="SSF48452">
    <property type="entry name" value="TPR-like"/>
    <property type="match status" value="1"/>
</dbReference>
<dbReference type="PROSITE" id="PS50005">
    <property type="entry name" value="TPR"/>
    <property type="match status" value="3"/>
</dbReference>
<dbReference type="PROSITE" id="PS50293">
    <property type="entry name" value="TPR_REGION"/>
    <property type="match status" value="1"/>
</dbReference>
<name>YCF3_PYRYE</name>
<organism>
    <name type="scientific">Pyropia yezoensis</name>
    <name type="common">Susabi-nori</name>
    <name type="synonym">Porphyra yezoensis</name>
    <dbReference type="NCBI Taxonomy" id="2788"/>
    <lineage>
        <taxon>Eukaryota</taxon>
        <taxon>Rhodophyta</taxon>
        <taxon>Bangiophyceae</taxon>
        <taxon>Bangiales</taxon>
        <taxon>Bangiaceae</taxon>
        <taxon>Pyropia</taxon>
    </lineage>
</organism>
<keyword id="KW-0150">Chloroplast</keyword>
<keyword id="KW-0472">Membrane</keyword>
<keyword id="KW-0602">Photosynthesis</keyword>
<keyword id="KW-0934">Plastid</keyword>
<keyword id="KW-0677">Repeat</keyword>
<keyword id="KW-0793">Thylakoid</keyword>
<keyword id="KW-0802">TPR repeat</keyword>
<proteinExistence type="inferred from homology"/>
<geneLocation type="chloroplast"/>
<reference key="1">
    <citation type="submission" date="2003-11" db="EMBL/GenBank/DDBJ databases">
        <title>Whole genome sequence of Porphyra yezoensis chloroplast.</title>
        <authorList>
            <person name="Kunimoto M."/>
            <person name="Morishima K."/>
            <person name="Yoshikawa M."/>
            <person name="Fukuda S."/>
            <person name="Kobayashi T."/>
            <person name="Kobayashi M."/>
            <person name="Okazaki T."/>
            <person name="Ohara I."/>
            <person name="Nakayama I."/>
        </authorList>
    </citation>
    <scope>NUCLEOTIDE SEQUENCE [LARGE SCALE GENOMIC DNA]</scope>
    <source>
        <strain>U-51</strain>
    </source>
</reference>
<comment type="function">
    <text evidence="1">Essential for the assembly of the photosystem I (PSI) complex. May act as a chaperone-like factor to guide the assembly of the PSI subunits.</text>
</comment>
<comment type="subcellular location">
    <subcellularLocation>
        <location evidence="1">Plastid</location>
        <location evidence="1">Chloroplast thylakoid membrane</location>
        <topology evidence="1">Peripheral membrane protein</topology>
    </subcellularLocation>
</comment>
<comment type="similarity">
    <text evidence="1">Belongs to the Ycf3 family.</text>
</comment>
<accession>Q1XDM9</accession>
<protein>
    <recommendedName>
        <fullName evidence="1">Photosystem I assembly protein Ycf3</fullName>
    </recommendedName>
</protein>